<organism>
    <name type="scientific">Cupriavidus metallidurans (strain ATCC 43123 / DSM 2839 / NBRC 102507 / CH34)</name>
    <name type="common">Ralstonia metallidurans</name>
    <dbReference type="NCBI Taxonomy" id="266264"/>
    <lineage>
        <taxon>Bacteria</taxon>
        <taxon>Pseudomonadati</taxon>
        <taxon>Pseudomonadota</taxon>
        <taxon>Betaproteobacteria</taxon>
        <taxon>Burkholderiales</taxon>
        <taxon>Burkholderiaceae</taxon>
        <taxon>Cupriavidus</taxon>
    </lineage>
</organism>
<dbReference type="EC" id="2.4.1.227" evidence="1"/>
<dbReference type="EMBL" id="CP000352">
    <property type="protein sequence ID" value="ABF10000.1"/>
    <property type="molecule type" value="Genomic_DNA"/>
</dbReference>
<dbReference type="RefSeq" id="WP_011517620.1">
    <property type="nucleotide sequence ID" value="NC_007973.1"/>
</dbReference>
<dbReference type="SMR" id="Q1LIM6"/>
<dbReference type="STRING" id="266264.Rmet_3128"/>
<dbReference type="CAZy" id="GT28">
    <property type="family name" value="Glycosyltransferase Family 28"/>
</dbReference>
<dbReference type="KEGG" id="rme:Rmet_3128"/>
<dbReference type="eggNOG" id="COG0707">
    <property type="taxonomic scope" value="Bacteria"/>
</dbReference>
<dbReference type="HOGENOM" id="CLU_037404_2_0_4"/>
<dbReference type="UniPathway" id="UPA00219"/>
<dbReference type="Proteomes" id="UP000002429">
    <property type="component" value="Chromosome"/>
</dbReference>
<dbReference type="GO" id="GO:0005886">
    <property type="term" value="C:plasma membrane"/>
    <property type="evidence" value="ECO:0007669"/>
    <property type="project" value="UniProtKB-SubCell"/>
</dbReference>
<dbReference type="GO" id="GO:0051991">
    <property type="term" value="F:UDP-N-acetyl-D-glucosamine:N-acetylmuramoyl-L-alanyl-D-glutamyl-meso-2,6-diaminopimelyl-D-alanyl-D-alanine-diphosphoundecaprenol 4-beta-N-acetylglucosaminlytransferase activity"/>
    <property type="evidence" value="ECO:0007669"/>
    <property type="project" value="RHEA"/>
</dbReference>
<dbReference type="GO" id="GO:0050511">
    <property type="term" value="F:undecaprenyldiphospho-muramoylpentapeptide beta-N-acetylglucosaminyltransferase activity"/>
    <property type="evidence" value="ECO:0007669"/>
    <property type="project" value="UniProtKB-UniRule"/>
</dbReference>
<dbReference type="GO" id="GO:0005975">
    <property type="term" value="P:carbohydrate metabolic process"/>
    <property type="evidence" value="ECO:0007669"/>
    <property type="project" value="InterPro"/>
</dbReference>
<dbReference type="GO" id="GO:0051301">
    <property type="term" value="P:cell division"/>
    <property type="evidence" value="ECO:0007669"/>
    <property type="project" value="UniProtKB-KW"/>
</dbReference>
<dbReference type="GO" id="GO:0071555">
    <property type="term" value="P:cell wall organization"/>
    <property type="evidence" value="ECO:0007669"/>
    <property type="project" value="UniProtKB-KW"/>
</dbReference>
<dbReference type="GO" id="GO:0030259">
    <property type="term" value="P:lipid glycosylation"/>
    <property type="evidence" value="ECO:0007669"/>
    <property type="project" value="UniProtKB-UniRule"/>
</dbReference>
<dbReference type="GO" id="GO:0009252">
    <property type="term" value="P:peptidoglycan biosynthetic process"/>
    <property type="evidence" value="ECO:0007669"/>
    <property type="project" value="UniProtKB-UniRule"/>
</dbReference>
<dbReference type="GO" id="GO:0008360">
    <property type="term" value="P:regulation of cell shape"/>
    <property type="evidence" value="ECO:0007669"/>
    <property type="project" value="UniProtKB-KW"/>
</dbReference>
<dbReference type="CDD" id="cd03785">
    <property type="entry name" value="GT28_MurG"/>
    <property type="match status" value="1"/>
</dbReference>
<dbReference type="Gene3D" id="3.40.50.2000">
    <property type="entry name" value="Glycogen Phosphorylase B"/>
    <property type="match status" value="2"/>
</dbReference>
<dbReference type="HAMAP" id="MF_00033">
    <property type="entry name" value="MurG"/>
    <property type="match status" value="1"/>
</dbReference>
<dbReference type="InterPro" id="IPR006009">
    <property type="entry name" value="GlcNAc_MurG"/>
</dbReference>
<dbReference type="InterPro" id="IPR007235">
    <property type="entry name" value="Glyco_trans_28_C"/>
</dbReference>
<dbReference type="InterPro" id="IPR004276">
    <property type="entry name" value="GlycoTrans_28_N"/>
</dbReference>
<dbReference type="NCBIfam" id="TIGR01133">
    <property type="entry name" value="murG"/>
    <property type="match status" value="1"/>
</dbReference>
<dbReference type="PANTHER" id="PTHR21015:SF22">
    <property type="entry name" value="GLYCOSYLTRANSFERASE"/>
    <property type="match status" value="1"/>
</dbReference>
<dbReference type="PANTHER" id="PTHR21015">
    <property type="entry name" value="UDP-N-ACETYLGLUCOSAMINE--N-ACETYLMURAMYL-(PENTAPEPTIDE) PYROPHOSPHORYL-UNDECAPRENOL N-ACETYLGLUCOSAMINE TRANSFERASE 1"/>
    <property type="match status" value="1"/>
</dbReference>
<dbReference type="Pfam" id="PF04101">
    <property type="entry name" value="Glyco_tran_28_C"/>
    <property type="match status" value="1"/>
</dbReference>
<dbReference type="Pfam" id="PF03033">
    <property type="entry name" value="Glyco_transf_28"/>
    <property type="match status" value="1"/>
</dbReference>
<dbReference type="SUPFAM" id="SSF53756">
    <property type="entry name" value="UDP-Glycosyltransferase/glycogen phosphorylase"/>
    <property type="match status" value="1"/>
</dbReference>
<evidence type="ECO:0000255" key="1">
    <source>
        <dbReference type="HAMAP-Rule" id="MF_00033"/>
    </source>
</evidence>
<protein>
    <recommendedName>
        <fullName evidence="1">UDP-N-acetylglucosamine--N-acetylmuramyl-(pentapeptide) pyrophosphoryl-undecaprenol N-acetylglucosamine transferase</fullName>
        <ecNumber evidence="1">2.4.1.227</ecNumber>
    </recommendedName>
    <alternativeName>
        <fullName evidence="1">Undecaprenyl-PP-MurNAc-pentapeptide-UDPGlcNAc GlcNAc transferase</fullName>
    </alternativeName>
</protein>
<comment type="function">
    <text evidence="1">Cell wall formation. Catalyzes the transfer of a GlcNAc subunit on undecaprenyl-pyrophosphoryl-MurNAc-pentapeptide (lipid intermediate I) to form undecaprenyl-pyrophosphoryl-MurNAc-(pentapeptide)GlcNAc (lipid intermediate II).</text>
</comment>
<comment type="catalytic activity">
    <reaction evidence="1">
        <text>di-trans,octa-cis-undecaprenyl diphospho-N-acetyl-alpha-D-muramoyl-L-alanyl-D-glutamyl-meso-2,6-diaminopimeloyl-D-alanyl-D-alanine + UDP-N-acetyl-alpha-D-glucosamine = di-trans,octa-cis-undecaprenyl diphospho-[N-acetyl-alpha-D-glucosaminyl-(1-&gt;4)]-N-acetyl-alpha-D-muramoyl-L-alanyl-D-glutamyl-meso-2,6-diaminopimeloyl-D-alanyl-D-alanine + UDP + H(+)</text>
        <dbReference type="Rhea" id="RHEA:31227"/>
        <dbReference type="ChEBI" id="CHEBI:15378"/>
        <dbReference type="ChEBI" id="CHEBI:57705"/>
        <dbReference type="ChEBI" id="CHEBI:58223"/>
        <dbReference type="ChEBI" id="CHEBI:61387"/>
        <dbReference type="ChEBI" id="CHEBI:61388"/>
        <dbReference type="EC" id="2.4.1.227"/>
    </reaction>
</comment>
<comment type="pathway">
    <text evidence="1">Cell wall biogenesis; peptidoglycan biosynthesis.</text>
</comment>
<comment type="subcellular location">
    <subcellularLocation>
        <location evidence="1">Cell inner membrane</location>
        <topology evidence="1">Peripheral membrane protein</topology>
        <orientation evidence="1">Cytoplasmic side</orientation>
    </subcellularLocation>
</comment>
<comment type="similarity">
    <text evidence="1">Belongs to the glycosyltransferase 28 family. MurG subfamily.</text>
</comment>
<name>MURG_CUPMC</name>
<gene>
    <name evidence="1" type="primary">murG</name>
    <name type="ordered locus">Rmet_3128</name>
</gene>
<reference key="1">
    <citation type="journal article" date="2010" name="PLoS ONE">
        <title>The complete genome sequence of Cupriavidus metallidurans strain CH34, a master survivalist in harsh and anthropogenic environments.</title>
        <authorList>
            <person name="Janssen P.J."/>
            <person name="Van Houdt R."/>
            <person name="Moors H."/>
            <person name="Monsieurs P."/>
            <person name="Morin N."/>
            <person name="Michaux A."/>
            <person name="Benotmane M.A."/>
            <person name="Leys N."/>
            <person name="Vallaeys T."/>
            <person name="Lapidus A."/>
            <person name="Monchy S."/>
            <person name="Medigue C."/>
            <person name="Taghavi S."/>
            <person name="McCorkle S."/>
            <person name="Dunn J."/>
            <person name="van der Lelie D."/>
            <person name="Mergeay M."/>
        </authorList>
    </citation>
    <scope>NUCLEOTIDE SEQUENCE [LARGE SCALE GENOMIC DNA]</scope>
    <source>
        <strain>ATCC 43123 / DSM 2839 / NBRC 102507 / CH34</strain>
    </source>
</reference>
<proteinExistence type="inferred from homology"/>
<feature type="chain" id="PRO_0000315145" description="UDP-N-acetylglucosamine--N-acetylmuramyl-(pentapeptide) pyrophosphoryl-undecaprenol N-acetylglucosamine transferase">
    <location>
        <begin position="1"/>
        <end position="356"/>
    </location>
</feature>
<feature type="binding site" evidence="1">
    <location>
        <begin position="13"/>
        <end position="15"/>
    </location>
    <ligand>
        <name>UDP-N-acetyl-alpha-D-glucosamine</name>
        <dbReference type="ChEBI" id="CHEBI:57705"/>
    </ligand>
</feature>
<feature type="binding site" evidence="1">
    <location>
        <position position="125"/>
    </location>
    <ligand>
        <name>UDP-N-acetyl-alpha-D-glucosamine</name>
        <dbReference type="ChEBI" id="CHEBI:57705"/>
    </ligand>
</feature>
<feature type="binding site" evidence="1">
    <location>
        <position position="161"/>
    </location>
    <ligand>
        <name>UDP-N-acetyl-alpha-D-glucosamine</name>
        <dbReference type="ChEBI" id="CHEBI:57705"/>
    </ligand>
</feature>
<feature type="binding site" evidence="1">
    <location>
        <position position="189"/>
    </location>
    <ligand>
        <name>UDP-N-acetyl-alpha-D-glucosamine</name>
        <dbReference type="ChEBI" id="CHEBI:57705"/>
    </ligand>
</feature>
<feature type="binding site" evidence="1">
    <location>
        <position position="243"/>
    </location>
    <ligand>
        <name>UDP-N-acetyl-alpha-D-glucosamine</name>
        <dbReference type="ChEBI" id="CHEBI:57705"/>
    </ligand>
</feature>
<feature type="binding site" evidence="1">
    <location>
        <position position="288"/>
    </location>
    <ligand>
        <name>UDP-N-acetyl-alpha-D-glucosamine</name>
        <dbReference type="ChEBI" id="CHEBI:57705"/>
    </ligand>
</feature>
<keyword id="KW-0131">Cell cycle</keyword>
<keyword id="KW-0132">Cell division</keyword>
<keyword id="KW-0997">Cell inner membrane</keyword>
<keyword id="KW-1003">Cell membrane</keyword>
<keyword id="KW-0133">Cell shape</keyword>
<keyword id="KW-0961">Cell wall biogenesis/degradation</keyword>
<keyword id="KW-0328">Glycosyltransferase</keyword>
<keyword id="KW-0472">Membrane</keyword>
<keyword id="KW-0573">Peptidoglycan synthesis</keyword>
<keyword id="KW-1185">Reference proteome</keyword>
<keyword id="KW-0808">Transferase</keyword>
<accession>Q1LIM6</accession>
<sequence>MTARTLLVMAGGTGGHVFPGLAVARALRDEGWRVVWLGNRTGMEATLVPKHDIPMEYIQFGGLRGKGLLTKLLLPLNLLRAFWQSIGALRRVKPDVVLGMGGYITFPAGMMASLLGRPLVLHEQNSIAGLANKVLAKVADRVLCAFPDALPNSEWTGNPVRAELAQIPAPESRYDHRAGPLHVLVVGGSLGAAALNDVVPKAIALLPEGQRPVVKHQAGAKQIDTLRANYAAAGVAGDTVPFIDDMAAAYADADLVICRAGAMTVSEVAAAGVAALFVPFPHAVDDHQTTNATFLSKQGAALLVQQNELTAEGLAKTLAGLSRTQLKDMARAARGLAKPEATRRVAEICSQLAGKS</sequence>